<protein>
    <recommendedName>
        <fullName evidence="1">DNA mismatch repair protein MutH</fullName>
    </recommendedName>
    <alternativeName>
        <fullName evidence="1">Methyl-directed mismatch repair protein</fullName>
    </alternativeName>
</protein>
<gene>
    <name evidence="1" type="primary">mutH</name>
    <name type="ordered locus">CGSHiGG_05190</name>
</gene>
<feature type="chain" id="PRO_1000046700" description="DNA mismatch repair protein MutH">
    <location>
        <begin position="1"/>
        <end position="223"/>
    </location>
</feature>
<reference key="1">
    <citation type="journal article" date="2007" name="Genome Biol.">
        <title>Characterization and modeling of the Haemophilus influenzae core and supragenomes based on the complete genomic sequences of Rd and 12 clinical nontypeable strains.</title>
        <authorList>
            <person name="Hogg J.S."/>
            <person name="Hu F.Z."/>
            <person name="Janto B."/>
            <person name="Boissy R."/>
            <person name="Hayes J."/>
            <person name="Keefe R."/>
            <person name="Post J.C."/>
            <person name="Ehrlich G.D."/>
        </authorList>
    </citation>
    <scope>NUCLEOTIDE SEQUENCE [LARGE SCALE GENOMIC DNA]</scope>
    <source>
        <strain>PittGG</strain>
    </source>
</reference>
<keyword id="KW-0963">Cytoplasm</keyword>
<keyword id="KW-0227">DNA damage</keyword>
<keyword id="KW-0234">DNA repair</keyword>
<keyword id="KW-0255">Endonuclease</keyword>
<keyword id="KW-0378">Hydrolase</keyword>
<keyword id="KW-0540">Nuclease</keyword>
<comment type="function">
    <text evidence="1">Sequence-specific endonuclease that cleaves unmethylated GATC sequences. It is involved in DNA mismatch repair.</text>
</comment>
<comment type="subcellular location">
    <subcellularLocation>
        <location evidence="1">Cytoplasm</location>
    </subcellularLocation>
</comment>
<comment type="similarity">
    <text evidence="1">Belongs to the MutH family.</text>
</comment>
<sequence length="223" mass="24850">MIPQTLEQLLSQAQSIAGLTFGELADELHIPVPPDLKRDKGWVGMLLERALGATAGSKAEQDFSHLGVELKTLPINAEGYPLETTFVSLAPLVQNSGVKWENSHVRHKLSCVLWMPIEGSRHIPLRERHIGAPILWKPTAEQERQLKQDWEELMDLIVLGKLDQITARIGEVMQLRPKGANSRAVTKGIGKNGEIIDTLPLGFYLRKEFTAQILNAFLDVKPL</sequence>
<organism>
    <name type="scientific">Haemophilus influenzae (strain PittGG)</name>
    <dbReference type="NCBI Taxonomy" id="374931"/>
    <lineage>
        <taxon>Bacteria</taxon>
        <taxon>Pseudomonadati</taxon>
        <taxon>Pseudomonadota</taxon>
        <taxon>Gammaproteobacteria</taxon>
        <taxon>Pasteurellales</taxon>
        <taxon>Pasteurellaceae</taxon>
        <taxon>Haemophilus</taxon>
    </lineage>
</organism>
<dbReference type="EMBL" id="CP000672">
    <property type="protein sequence ID" value="ABQ99974.1"/>
    <property type="molecule type" value="Genomic_DNA"/>
</dbReference>
<dbReference type="SMR" id="A5UGR9"/>
<dbReference type="KEGG" id="hiq:CGSHiGG_05190"/>
<dbReference type="HOGENOM" id="CLU_086669_0_0_6"/>
<dbReference type="Proteomes" id="UP000001990">
    <property type="component" value="Chromosome"/>
</dbReference>
<dbReference type="GO" id="GO:0005737">
    <property type="term" value="C:cytoplasm"/>
    <property type="evidence" value="ECO:0007669"/>
    <property type="project" value="UniProtKB-SubCell"/>
</dbReference>
<dbReference type="GO" id="GO:0003677">
    <property type="term" value="F:DNA binding"/>
    <property type="evidence" value="ECO:0007669"/>
    <property type="project" value="InterPro"/>
</dbReference>
<dbReference type="GO" id="GO:0004519">
    <property type="term" value="F:endonuclease activity"/>
    <property type="evidence" value="ECO:0007669"/>
    <property type="project" value="UniProtKB-UniRule"/>
</dbReference>
<dbReference type="GO" id="GO:0006304">
    <property type="term" value="P:DNA modification"/>
    <property type="evidence" value="ECO:0007669"/>
    <property type="project" value="InterPro"/>
</dbReference>
<dbReference type="GO" id="GO:0006298">
    <property type="term" value="P:mismatch repair"/>
    <property type="evidence" value="ECO:0007669"/>
    <property type="project" value="UniProtKB-UniRule"/>
</dbReference>
<dbReference type="CDD" id="cd00583">
    <property type="entry name" value="MutH-like"/>
    <property type="match status" value="1"/>
</dbReference>
<dbReference type="Gene3D" id="3.40.600.10">
    <property type="entry name" value="DNA mismatch repair MutH/Restriction endonuclease, type II"/>
    <property type="match status" value="1"/>
</dbReference>
<dbReference type="HAMAP" id="MF_00759">
    <property type="entry name" value="MutH"/>
    <property type="match status" value="1"/>
</dbReference>
<dbReference type="InterPro" id="IPR004230">
    <property type="entry name" value="DNA_mismatch_repair_MutH"/>
</dbReference>
<dbReference type="InterPro" id="IPR011337">
    <property type="entry name" value="DNA_rep_MutH/RE_typeII_Sau3AI"/>
</dbReference>
<dbReference type="InterPro" id="IPR037057">
    <property type="entry name" value="DNA_rep_MutH/T2_RE_sf"/>
</dbReference>
<dbReference type="InterPro" id="IPR011335">
    <property type="entry name" value="Restrct_endonuc-II-like"/>
</dbReference>
<dbReference type="NCBIfam" id="TIGR02248">
    <property type="entry name" value="mutH_TIGR"/>
    <property type="match status" value="1"/>
</dbReference>
<dbReference type="NCBIfam" id="NF003458">
    <property type="entry name" value="PRK05070.1"/>
    <property type="match status" value="1"/>
</dbReference>
<dbReference type="Pfam" id="PF02976">
    <property type="entry name" value="MutH"/>
    <property type="match status" value="1"/>
</dbReference>
<dbReference type="SMART" id="SM00927">
    <property type="entry name" value="MutH"/>
    <property type="match status" value="1"/>
</dbReference>
<dbReference type="SUPFAM" id="SSF52980">
    <property type="entry name" value="Restriction endonuclease-like"/>
    <property type="match status" value="1"/>
</dbReference>
<proteinExistence type="inferred from homology"/>
<name>MUTH_HAEIG</name>
<accession>A5UGR9</accession>
<evidence type="ECO:0000255" key="1">
    <source>
        <dbReference type="HAMAP-Rule" id="MF_00759"/>
    </source>
</evidence>